<keyword id="KW-0150">Chloroplast</keyword>
<keyword id="KW-0934">Plastid</keyword>
<dbReference type="EMBL" id="AP006715">
    <property type="protein sequence ID" value="BAE92504.1"/>
    <property type="molecule type" value="Genomic_DNA"/>
</dbReference>
<dbReference type="RefSeq" id="YP_537061.1">
    <property type="nucleotide sequence ID" value="NC_007932.1"/>
</dbReference>
<dbReference type="SMR" id="Q1XDA7"/>
<dbReference type="GO" id="GO:0009507">
    <property type="term" value="C:chloroplast"/>
    <property type="evidence" value="ECO:0007669"/>
    <property type="project" value="UniProtKB-SubCell"/>
</dbReference>
<dbReference type="Gene3D" id="3.40.1410.10">
    <property type="entry name" value="Chorismate lyase-like"/>
    <property type="match status" value="1"/>
</dbReference>
<dbReference type="InterPro" id="IPR028978">
    <property type="entry name" value="Chorismate_lyase_/UTRA_dom_sf"/>
</dbReference>
<dbReference type="InterPro" id="IPR002800">
    <property type="entry name" value="Rv2949c-like"/>
</dbReference>
<dbReference type="Pfam" id="PF01947">
    <property type="entry name" value="Rv2949c-like"/>
    <property type="match status" value="1"/>
</dbReference>
<dbReference type="SUPFAM" id="SSF64288">
    <property type="entry name" value="Chorismate lyase-like"/>
    <property type="match status" value="1"/>
</dbReference>
<accession>Q1XDA7</accession>
<geneLocation type="chloroplast"/>
<protein>
    <recommendedName>
        <fullName>Uncharacterized protein ycf21</fullName>
    </recommendedName>
</protein>
<reference key="1">
    <citation type="submission" date="2003-11" db="EMBL/GenBank/DDBJ databases">
        <title>Whole genome sequence of Porphyra yezoensis chloroplast.</title>
        <authorList>
            <person name="Kunimoto M."/>
            <person name="Morishima K."/>
            <person name="Yoshikawa M."/>
            <person name="Fukuda S."/>
            <person name="Kobayashi T."/>
            <person name="Kobayashi M."/>
            <person name="Okazaki T."/>
            <person name="Ohara I."/>
            <person name="Nakayama I."/>
        </authorList>
    </citation>
    <scope>NUCLEOTIDE SEQUENCE [LARGE SCALE GENOMIC DNA]</scope>
    <source>
        <strain>U-51</strain>
    </source>
</reference>
<gene>
    <name type="primary">ycf21</name>
</gene>
<name>YCF21_PYRYE</name>
<feature type="chain" id="PRO_0000277269" description="Uncharacterized protein ycf21">
    <location>
        <begin position="1"/>
        <end position="174"/>
    </location>
</feature>
<proteinExistence type="inferred from homology"/>
<organism>
    <name type="scientific">Pyropia yezoensis</name>
    <name type="common">Susabi-nori</name>
    <name type="synonym">Porphyra yezoensis</name>
    <dbReference type="NCBI Taxonomy" id="2788"/>
    <lineage>
        <taxon>Eukaryota</taxon>
        <taxon>Rhodophyta</taxon>
        <taxon>Bangiophyceae</taxon>
        <taxon>Bangiales</taxon>
        <taxon>Bangiaceae</taxon>
        <taxon>Pyropia</taxon>
    </lineage>
</organism>
<sequence length="174" mass="20633">MTFNFISFCRIEVILPCQIYSNTSIPLIWKIVLLGDGSFTRHCQIITYRDTEINHISTSIYSKVHNSPQFYVNRRVWIGNNLKNKLIFASSWWNIESYQAIYKYPSRAIGSLFIQSDLDYYRDIHCLFLGYSTELENLFLVPGPFWGRYYTLFYKGKPISLIYEIFSPLLENFQ</sequence>
<evidence type="ECO:0000305" key="1"/>
<comment type="subcellular location">
    <subcellularLocation>
        <location>Plastid</location>
        <location>Chloroplast</location>
    </subcellularLocation>
</comment>
<comment type="similarity">
    <text evidence="1">Belongs to the ycf21 family.</text>
</comment>